<name>DLPA_ORNAN</name>
<dbReference type="SMR" id="P0C8B2"/>
<dbReference type="InParanoid" id="P0C8B2"/>
<dbReference type="Proteomes" id="UP000002279">
    <property type="component" value="Unplaced"/>
</dbReference>
<dbReference type="GO" id="GO:0005576">
    <property type="term" value="C:extracellular region"/>
    <property type="evidence" value="ECO:0007669"/>
    <property type="project" value="UniProtKB-SubCell"/>
</dbReference>
<dbReference type="GO" id="GO:0090729">
    <property type="term" value="F:toxin activity"/>
    <property type="evidence" value="ECO:0007669"/>
    <property type="project" value="UniProtKB-KW"/>
</dbReference>
<dbReference type="Gene3D" id="2.20.20.10">
    <property type="entry name" value="Anthopleurin-A"/>
    <property type="match status" value="1"/>
</dbReference>
<dbReference type="InterPro" id="IPR012553">
    <property type="entry name" value="Defensin_3"/>
</dbReference>
<dbReference type="InterPro" id="IPR023355">
    <property type="entry name" value="Myo_ane_neurotoxin_sf"/>
</dbReference>
<dbReference type="Pfam" id="PF08131">
    <property type="entry name" value="Defensin_3"/>
    <property type="match status" value="1"/>
</dbReference>
<dbReference type="SUPFAM" id="SSF57392">
    <property type="entry name" value="Defensin-like"/>
    <property type="match status" value="1"/>
</dbReference>
<feature type="signal peptide" evidence="3">
    <location>
        <begin position="1"/>
        <end position="22"/>
    </location>
</feature>
<feature type="propeptide" id="PRO_0000352731" evidence="1">
    <location>
        <begin position="23"/>
        <end position="24"/>
    </location>
</feature>
<feature type="chain" id="PRO_0000352732" description="Ornithorhynchus venom defensin-like peptide A">
    <location>
        <begin position="25"/>
        <end position="66"/>
    </location>
</feature>
<feature type="disulfide bond" evidence="2">
    <location>
        <begin position="33"/>
        <end position="63"/>
    </location>
</feature>
<feature type="disulfide bond" evidence="2">
    <location>
        <begin position="40"/>
        <end position="56"/>
    </location>
</feature>
<feature type="disulfide bond" evidence="2">
    <location>
        <begin position="48"/>
        <end position="64"/>
    </location>
</feature>
<proteinExistence type="evidence at transcript level"/>
<reference key="1">
    <citation type="journal article" date="2008" name="Toxicon">
        <title>Expression patterns of platypus defensin and related venom genes across a range of tissue types reveal the possibility of broader functions for OvDLPs than previously suspected.</title>
        <authorList>
            <person name="Whittington C.M."/>
            <person name="Papenfuss A.T."/>
            <person name="Kuchel P.W."/>
            <person name="Belov K."/>
        </authorList>
    </citation>
    <scope>NUCLEOTIDE SEQUENCE [MRNA]</scope>
    <scope>TISSUE SPECIFICITY</scope>
</reference>
<comment type="function">
    <text evidence="2">Does not show antimicrobial, myotoxic, hemolytic and cell-promoting activities.</text>
</comment>
<comment type="subcellular location">
    <subcellularLocation>
        <location evidence="2">Secreted</location>
    </subcellularLocation>
</comment>
<comment type="tissue specificity">
    <text evidence="4">Produced by the crural gland and detected in venom from the spur located on each male hind leg. Is the only OvDLP that is expressed in venom gland alone.</text>
</comment>
<comment type="online information" name="Platypus resources">
    <link uri="https://www.twinkl.ch/search?q=platypus"/>
</comment>
<sequence>MRLTYLLLLLVAVLFQAGSGSAEPIFFYGRQPCSYYDGVCRDKSDVNCKYIAFTYCENPNQRCCYY</sequence>
<protein>
    <recommendedName>
        <fullName evidence="5">Ornithorhynchus venom defensin-like peptide A</fullName>
        <shortName evidence="5">OvDLP-A</shortName>
    </recommendedName>
</protein>
<keyword id="KW-1015">Disulfide bond</keyword>
<keyword id="KW-1185">Reference proteome</keyword>
<keyword id="KW-0964">Secreted</keyword>
<keyword id="KW-0732">Signal</keyword>
<keyword id="KW-0800">Toxin</keyword>
<accession>P0C8B2</accession>
<evidence type="ECO:0000250" key="1"/>
<evidence type="ECO:0000250" key="2">
    <source>
        <dbReference type="UniProtKB" id="P82140"/>
    </source>
</evidence>
<evidence type="ECO:0000255" key="3"/>
<evidence type="ECO:0000269" key="4">
    <source>
    </source>
</evidence>
<evidence type="ECO:0000303" key="5">
    <source>
    </source>
</evidence>
<organism>
    <name type="scientific">Ornithorhynchus anatinus</name>
    <name type="common">Duckbill platypus</name>
    <dbReference type="NCBI Taxonomy" id="9258"/>
    <lineage>
        <taxon>Eukaryota</taxon>
        <taxon>Metazoa</taxon>
        <taxon>Chordata</taxon>
        <taxon>Craniata</taxon>
        <taxon>Vertebrata</taxon>
        <taxon>Euteleostomi</taxon>
        <taxon>Mammalia</taxon>
        <taxon>Monotremata</taxon>
        <taxon>Ornithorhynchidae</taxon>
        <taxon>Ornithorhynchus</taxon>
    </lineage>
</organism>